<feature type="chain" id="PRO_0000069564" description="G-protein coupled receptor 35">
    <location>
        <begin position="1"/>
        <end position="307"/>
    </location>
</feature>
<feature type="topological domain" description="Extracellular" evidence="3">
    <location>
        <begin position="1"/>
        <end position="18"/>
    </location>
</feature>
<feature type="transmembrane region" description="Helical; Name=1" evidence="3">
    <location>
        <begin position="19"/>
        <end position="39"/>
    </location>
</feature>
<feature type="topological domain" description="Cytoplasmic" evidence="3">
    <location>
        <begin position="40"/>
        <end position="53"/>
    </location>
</feature>
<feature type="transmembrane region" description="Helical; Name=2" evidence="3">
    <location>
        <begin position="54"/>
        <end position="74"/>
    </location>
</feature>
<feature type="topological domain" description="Extracellular" evidence="3">
    <location>
        <begin position="75"/>
        <end position="88"/>
    </location>
</feature>
<feature type="transmembrane region" description="Helical; Name=3" evidence="3">
    <location>
        <begin position="89"/>
        <end position="110"/>
    </location>
</feature>
<feature type="topological domain" description="Cytoplasmic" evidence="3">
    <location>
        <begin position="111"/>
        <end position="129"/>
    </location>
</feature>
<feature type="transmembrane region" description="Helical; Name=4" evidence="3">
    <location>
        <begin position="130"/>
        <end position="150"/>
    </location>
</feature>
<feature type="topological domain" description="Extracellular" evidence="3">
    <location>
        <begin position="151"/>
        <end position="176"/>
    </location>
</feature>
<feature type="transmembrane region" description="Helical; Name=5" evidence="3">
    <location>
        <begin position="177"/>
        <end position="197"/>
    </location>
</feature>
<feature type="topological domain" description="Cytoplasmic" evidence="3">
    <location>
        <begin position="198"/>
        <end position="217"/>
    </location>
</feature>
<feature type="transmembrane region" description="Helical; Name=6" evidence="3">
    <location>
        <begin position="218"/>
        <end position="238"/>
    </location>
</feature>
<feature type="topological domain" description="Extracellular" evidence="3">
    <location>
        <begin position="239"/>
        <end position="257"/>
    </location>
</feature>
<feature type="transmembrane region" description="Helical; Name=7" evidence="3">
    <location>
        <begin position="258"/>
        <end position="278"/>
    </location>
</feature>
<feature type="topological domain" description="Cytoplasmic" evidence="3">
    <location>
        <begin position="279"/>
        <end position="307"/>
    </location>
</feature>
<feature type="region of interest" description="Disordered" evidence="5">
    <location>
        <begin position="288"/>
        <end position="307"/>
    </location>
</feature>
<feature type="modified residue" description="Phosphoserine" evidence="2">
    <location>
        <position position="286"/>
    </location>
</feature>
<feature type="modified residue" description="Phosphoserine" evidence="2">
    <location>
        <position position="292"/>
    </location>
</feature>
<feature type="modified residue" description="Phosphoserine" evidence="2">
    <location>
        <position position="298"/>
    </location>
</feature>
<feature type="modified residue" description="Phosphoserine" evidence="2">
    <location>
        <position position="301"/>
    </location>
</feature>
<feature type="glycosylation site" description="N-linked (GlcNAc...) asparagine" evidence="3">
    <location>
        <position position="2"/>
    </location>
</feature>
<feature type="glycosylation site" description="N-linked (GlcNAc...) asparagine" evidence="3">
    <location>
        <position position="7"/>
    </location>
</feature>
<feature type="disulfide bond" evidence="4">
    <location>
        <begin position="87"/>
        <end position="160"/>
    </location>
</feature>
<evidence type="ECO:0000250" key="1"/>
<evidence type="ECO:0000250" key="2">
    <source>
        <dbReference type="UniProtKB" id="Q9HC97"/>
    </source>
</evidence>
<evidence type="ECO:0000255" key="3"/>
<evidence type="ECO:0000255" key="4">
    <source>
        <dbReference type="PROSITE-ProRule" id="PRU00521"/>
    </source>
</evidence>
<evidence type="ECO:0000256" key="5">
    <source>
        <dbReference type="SAM" id="MobiDB-lite"/>
    </source>
</evidence>
<evidence type="ECO:0000269" key="6">
    <source>
    </source>
</evidence>
<evidence type="ECO:0000269" key="7">
    <source>
    </source>
</evidence>
<evidence type="ECO:0000269" key="8">
    <source>
    </source>
</evidence>
<keyword id="KW-1003">Cell membrane</keyword>
<keyword id="KW-1015">Disulfide bond</keyword>
<keyword id="KW-0297">G-protein coupled receptor</keyword>
<keyword id="KW-0325">Glycoprotein</keyword>
<keyword id="KW-0472">Membrane</keyword>
<keyword id="KW-0597">Phosphoprotein</keyword>
<keyword id="KW-0675">Receptor</keyword>
<keyword id="KW-1185">Reference proteome</keyword>
<keyword id="KW-0807">Transducer</keyword>
<keyword id="KW-0812">Transmembrane</keyword>
<keyword id="KW-1133">Transmembrane helix</keyword>
<accession>Q9ES90</accession>
<reference key="1">
    <citation type="journal article" date="2000" name="Nat. Genet.">
        <title>Genetic variation in the gene encoding calpain-10 is associated with type 2 diabetes mellitus.</title>
        <authorList>
            <person name="Horikawa Y."/>
            <person name="Oda N."/>
            <person name="Cox N.J."/>
            <person name="Li X."/>
            <person name="Orho-Melander M."/>
            <person name="Hara M."/>
            <person name="Hinokio Y."/>
            <person name="Lindner T.H."/>
            <person name="Mashima H."/>
            <person name="Schwarz P.E.H."/>
            <person name="del Bosque-Plata L."/>
            <person name="Horikawa Y."/>
            <person name="Oda Y."/>
            <person name="Yoshiuchi I."/>
            <person name="Colilla S."/>
            <person name="Polonsky K.S."/>
            <person name="Wei S."/>
            <person name="Concannon P."/>
            <person name="Iwasaki N."/>
            <person name="Schulze J."/>
            <person name="Baier L.J."/>
            <person name="Bogardus C."/>
            <person name="Groop L."/>
            <person name="Boerwinkle E."/>
            <person name="Hanis C.L."/>
            <person name="Bell G.I."/>
        </authorList>
    </citation>
    <scope>NUCLEOTIDE SEQUENCE [MRNA]</scope>
</reference>
<reference key="2">
    <citation type="journal article" date="2004" name="Genome Res.">
        <title>The status, quality, and expansion of the NIH full-length cDNA project: the Mammalian Gene Collection (MGC).</title>
        <authorList>
            <consortium name="The MGC Project Team"/>
        </authorList>
    </citation>
    <scope>NUCLEOTIDE SEQUENCE [LARGE SCALE MRNA]</scope>
    <source>
        <strain>C57BL/6J</strain>
        <tissue>Mammary gland</tissue>
    </source>
</reference>
<reference key="3">
    <citation type="journal article" date="2006" name="J. Biol. Chem.">
        <title>Kynurenic acid as a ligand for orphan G protein-coupled receptor GPR35.</title>
        <authorList>
            <person name="Wang J."/>
            <person name="Simonavicius N."/>
            <person name="Wu X."/>
            <person name="Swaminath G."/>
            <person name="Reagan J."/>
            <person name="Tian H."/>
            <person name="Ling L."/>
        </authorList>
    </citation>
    <scope>FUNCTION</scope>
    <scope>TISSUE SPECIFICITY</scope>
</reference>
<reference key="4">
    <citation type="journal article" date="2018" name="Cell Metab.">
        <title>Kynurenic Acid and Gpr35 Regulate Adipose Tissue Energy Homeostasis and Inflammation.</title>
        <authorList>
            <person name="Agudelo L.Z."/>
            <person name="Ferreira D.M.S."/>
            <person name="Cervenka I."/>
            <person name="Bryzgalova G."/>
            <person name="Dadvar S."/>
            <person name="Jannig P.R."/>
            <person name="Pettersson-Klein A.T."/>
            <person name="Lakshmikanth T."/>
            <person name="Sustarsic E.G."/>
            <person name="Porsmyr-Palmertz M."/>
            <person name="Correia J.C."/>
            <person name="Izadi M."/>
            <person name="Martinez-Redondo V."/>
            <person name="Ueland P.M."/>
            <person name="Midttun O."/>
            <person name="Gerhart-Hines Z."/>
            <person name="Brodin P."/>
            <person name="Pereira T."/>
            <person name="Berggren P.O."/>
            <person name="Ruas J.L."/>
        </authorList>
    </citation>
    <scope>FUNCTION</scope>
    <scope>DISRUPTION PHENOTYPE</scope>
</reference>
<reference key="5">
    <citation type="journal article" date="2020" name="Cell Rep.">
        <title>Lysophosphatidic Acid-Mediated GPR35 Signaling in CX3CR1+ Macrophages Regulates Intestinal Homeostasis.</title>
        <authorList>
            <consortium name="Swiss IBD. Cohort Investigators"/>
            <person name="Kaya B."/>
            <person name="Donas C."/>
            <person name="Wuggenig P."/>
            <person name="Diaz O.E."/>
            <person name="Morales R.A."/>
            <person name="Melhem H."/>
            <person name="Hernandez P.P."/>
            <person name="Kaymak T."/>
            <person name="Das S."/>
            <person name="Hruz P."/>
            <person name="Franc Y."/>
            <person name="Geier F."/>
            <person name="Ayata C.K."/>
            <person name="Villablanca E.J."/>
            <person name="Niess J.H."/>
        </authorList>
    </citation>
    <scope>FUNCTION</scope>
    <scope>DISRUPTION PHENOTYPE</scope>
    <scope>TISSUE SPECIFICITY</scope>
    <scope>INDUCTION BY INFLAMMATION</scope>
</reference>
<dbReference type="EMBL" id="AF200349">
    <property type="protein sequence ID" value="AAG18487.1"/>
    <property type="molecule type" value="mRNA"/>
</dbReference>
<dbReference type="EMBL" id="BC027429">
    <property type="protein sequence ID" value="AAH27429.1"/>
    <property type="molecule type" value="mRNA"/>
</dbReference>
<dbReference type="CCDS" id="CCDS15182.1"/>
<dbReference type="RefSeq" id="NP_001097999.1">
    <property type="nucleotide sequence ID" value="NM_001104529.2"/>
</dbReference>
<dbReference type="RefSeq" id="NP_001258695.1">
    <property type="nucleotide sequence ID" value="NM_001271766.2"/>
</dbReference>
<dbReference type="RefSeq" id="NP_001399782.1">
    <property type="nucleotide sequence ID" value="NM_001412853.1"/>
</dbReference>
<dbReference type="RefSeq" id="NP_071715.3">
    <property type="nucleotide sequence ID" value="NM_022320.4"/>
</dbReference>
<dbReference type="RefSeq" id="XP_006529842.1">
    <property type="nucleotide sequence ID" value="XM_006529779.5"/>
</dbReference>
<dbReference type="RefSeq" id="XP_006529843.1">
    <property type="nucleotide sequence ID" value="XM_006529780.4"/>
</dbReference>
<dbReference type="RefSeq" id="XP_006529844.1">
    <property type="nucleotide sequence ID" value="XM_006529781.3"/>
</dbReference>
<dbReference type="RefSeq" id="XP_011246355.1">
    <property type="nucleotide sequence ID" value="XM_011248053.4"/>
</dbReference>
<dbReference type="SMR" id="Q9ES90"/>
<dbReference type="FunCoup" id="Q9ES90">
    <property type="interactions" value="1103"/>
</dbReference>
<dbReference type="STRING" id="10090.ENSMUSP00000126914"/>
<dbReference type="BindingDB" id="Q9ES90"/>
<dbReference type="ChEMBL" id="CHEMBL2390813"/>
<dbReference type="DrugCentral" id="Q9ES90"/>
<dbReference type="GuidetoPHARMACOLOGY" id="102"/>
<dbReference type="GlyCosmos" id="Q9ES90">
    <property type="glycosylation" value="2 sites, No reported glycans"/>
</dbReference>
<dbReference type="GlyGen" id="Q9ES90">
    <property type="glycosylation" value="2 sites"/>
</dbReference>
<dbReference type="iPTMnet" id="Q9ES90"/>
<dbReference type="PhosphoSitePlus" id="Q9ES90"/>
<dbReference type="PaxDb" id="10090-ENSMUSP00000126914"/>
<dbReference type="ProteomicsDB" id="271067"/>
<dbReference type="Antibodypedia" id="34526">
    <property type="antibodies" value="229 antibodies from 30 providers"/>
</dbReference>
<dbReference type="DNASU" id="64095"/>
<dbReference type="Ensembl" id="ENSMUST00000064480.7">
    <property type="protein sequence ID" value="ENSMUSP00000070832.7"/>
    <property type="gene ID" value="ENSMUSG00000026271.16"/>
</dbReference>
<dbReference type="Ensembl" id="ENSMUST00000169198.3">
    <property type="protein sequence ID" value="ENSMUSP00000126914.2"/>
    <property type="gene ID" value="ENSMUSG00000026271.16"/>
</dbReference>
<dbReference type="Ensembl" id="ENSMUST00000186298.7">
    <property type="protein sequence ID" value="ENSMUSP00000139648.2"/>
    <property type="gene ID" value="ENSMUSG00000026271.16"/>
</dbReference>
<dbReference type="GeneID" id="64095"/>
<dbReference type="KEGG" id="mmu:64095"/>
<dbReference type="UCSC" id="uc007cbz.2">
    <property type="organism name" value="mouse"/>
</dbReference>
<dbReference type="AGR" id="MGI:1929509"/>
<dbReference type="CTD" id="2859"/>
<dbReference type="MGI" id="MGI:1929509">
    <property type="gene designation" value="Gpr35"/>
</dbReference>
<dbReference type="VEuPathDB" id="HostDB:ENSMUSG00000026271"/>
<dbReference type="eggNOG" id="ENOG502S0QN">
    <property type="taxonomic scope" value="Eukaryota"/>
</dbReference>
<dbReference type="GeneTree" id="ENSGT01040000240444"/>
<dbReference type="HOGENOM" id="CLU_009579_8_2_1"/>
<dbReference type="InParanoid" id="Q9ES90"/>
<dbReference type="OMA" id="YMSISLI"/>
<dbReference type="OrthoDB" id="6086428at2759"/>
<dbReference type="PhylomeDB" id="Q9ES90"/>
<dbReference type="TreeFam" id="TF335578"/>
<dbReference type="Reactome" id="R-MMU-373076">
    <property type="pathway name" value="Class A/1 (Rhodopsin-like receptors)"/>
</dbReference>
<dbReference type="BioGRID-ORCS" id="64095">
    <property type="hits" value="1 hit in 80 CRISPR screens"/>
</dbReference>
<dbReference type="PRO" id="PR:Q9ES90"/>
<dbReference type="Proteomes" id="UP000000589">
    <property type="component" value="Chromosome 1"/>
</dbReference>
<dbReference type="RNAct" id="Q9ES90">
    <property type="molecule type" value="protein"/>
</dbReference>
<dbReference type="Bgee" id="ENSMUSG00000026271">
    <property type="expression patterns" value="Expressed in animal zygote and 67 other cell types or tissues"/>
</dbReference>
<dbReference type="ExpressionAtlas" id="Q9ES90">
    <property type="expression patterns" value="baseline and differential"/>
</dbReference>
<dbReference type="GO" id="GO:0005886">
    <property type="term" value="C:plasma membrane"/>
    <property type="evidence" value="ECO:0000314"/>
    <property type="project" value="UniProtKB"/>
</dbReference>
<dbReference type="GO" id="GO:0016494">
    <property type="term" value="F:C-X-C chemokine receptor activity"/>
    <property type="evidence" value="ECO:0000250"/>
    <property type="project" value="UniProtKB"/>
</dbReference>
<dbReference type="GO" id="GO:0004950">
    <property type="term" value="F:chemokine receptor activity"/>
    <property type="evidence" value="ECO:0000266"/>
    <property type="project" value="MGI"/>
</dbReference>
<dbReference type="GO" id="GO:0004930">
    <property type="term" value="F:G protein-coupled receptor activity"/>
    <property type="evidence" value="ECO:0000250"/>
    <property type="project" value="UniProtKB"/>
</dbReference>
<dbReference type="GO" id="GO:0070098">
    <property type="term" value="P:chemokine-mediated signaling pathway"/>
    <property type="evidence" value="ECO:0000250"/>
    <property type="project" value="UniProtKB"/>
</dbReference>
<dbReference type="GO" id="GO:0007010">
    <property type="term" value="P:cytoskeleton organization"/>
    <property type="evidence" value="ECO:0000314"/>
    <property type="project" value="UniProtKB"/>
</dbReference>
<dbReference type="GO" id="GO:0007186">
    <property type="term" value="P:G protein-coupled receptor signaling pathway"/>
    <property type="evidence" value="ECO:0000250"/>
    <property type="project" value="UniProtKB"/>
</dbReference>
<dbReference type="GO" id="GO:0048246">
    <property type="term" value="P:macrophage chemotaxis"/>
    <property type="evidence" value="ECO:0000266"/>
    <property type="project" value="MGI"/>
</dbReference>
<dbReference type="GO" id="GO:0007204">
    <property type="term" value="P:positive regulation of cytosolic calcium ion concentration"/>
    <property type="evidence" value="ECO:0000250"/>
    <property type="project" value="UniProtKB"/>
</dbReference>
<dbReference type="CDD" id="cd15164">
    <property type="entry name" value="7tmA_GPR35-like"/>
    <property type="match status" value="1"/>
</dbReference>
<dbReference type="FunFam" id="1.20.1070.10:FF:000142">
    <property type="entry name" value="G protein-coupled receptor 55"/>
    <property type="match status" value="1"/>
</dbReference>
<dbReference type="Gene3D" id="1.20.1070.10">
    <property type="entry name" value="Rhodopsin 7-helix transmembrane proteins"/>
    <property type="match status" value="1"/>
</dbReference>
<dbReference type="InterPro" id="IPR000276">
    <property type="entry name" value="GPCR_Rhodpsn"/>
</dbReference>
<dbReference type="InterPro" id="IPR017452">
    <property type="entry name" value="GPCR_Rhodpsn_7TM"/>
</dbReference>
<dbReference type="InterPro" id="IPR044734">
    <property type="entry name" value="GPR35_7tmA"/>
</dbReference>
<dbReference type="PANTHER" id="PTHR24232">
    <property type="entry name" value="G-PROTEIN COUPLED RECEPTOR"/>
    <property type="match status" value="1"/>
</dbReference>
<dbReference type="PANTHER" id="PTHR24232:SF54">
    <property type="entry name" value="G-PROTEIN COUPLED RECEPTOR 35"/>
    <property type="match status" value="1"/>
</dbReference>
<dbReference type="Pfam" id="PF00001">
    <property type="entry name" value="7tm_1"/>
    <property type="match status" value="1"/>
</dbReference>
<dbReference type="PRINTS" id="PR00237">
    <property type="entry name" value="GPCRRHODOPSN"/>
</dbReference>
<dbReference type="SUPFAM" id="SSF81321">
    <property type="entry name" value="Family A G protein-coupled receptor-like"/>
    <property type="match status" value="1"/>
</dbReference>
<dbReference type="PROSITE" id="PS00237">
    <property type="entry name" value="G_PROTEIN_RECEP_F1_1"/>
    <property type="match status" value="1"/>
</dbReference>
<dbReference type="PROSITE" id="PS50262">
    <property type="entry name" value="G_PROTEIN_RECEP_F1_2"/>
    <property type="match status" value="1"/>
</dbReference>
<sequence>MNSTTCNSTLTWPASVNNFFIIYSALLLVLGLLLNSVALWVFCYRMHQWTETRIYMTNLAVADLCLLCSLPFVLYSLKYSSSDTPVCQLSQGIYLANRYMSISLVTAIAVDRYVAVRHPLRARELRSPRQAAAVCVALWVIVVTSLVVRWRLGMQEGGFCFSSQTRRNFSTTAFSLLGFYLPLAIVVFCSLQVVTVLSRRPAADVGQAEATQKATHMVWANLAVFVICFLPLHVVLTVQVSLNLNTCAARDTFSRALSITGKLSDTNCCLDAICYYYMAREFQEASKPATSSNTPHKSQDSQILSLT</sequence>
<gene>
    <name type="primary">Gpr35</name>
</gene>
<proteinExistence type="evidence at transcript level"/>
<name>GPR35_MOUSE</name>
<comment type="function">
    <text evidence="2 7 8">G-protein coupled receptor that binds to several ligands including the tryptophan metabolite kynurenic acid (KYNA), lysophosphatidic acid (LPA) or 5-hydroxyindoleacetic acid (5-HIAA) with high affinity, leading to rapid and transient activation of numerous intracellular signaling pathways. Plays a role in neutrophil recruitment to sites of inflammation and bacterial clearance through the major serotonin metabolite 5-HIAA that acts as a physiological ligand (By similarity). Stimulates lipid metabolism, thermogenic, and anti-inflammatory gene expression in adipose tissue once activated by kynurenic acid (PubMed:29414686). In macrophages, activation by lysophosphatidic acid promotes GPR35-induced signaling with a distinct transcriptional profile characterized by TNF production associated with ERK and NF-kappa-B activation. In turn, induces chemotaxis of macrophages (PubMed:32755573).</text>
</comment>
<comment type="subcellular location">
    <subcellularLocation>
        <location evidence="1">Cell membrane</location>
        <topology evidence="1">Multi-pass membrane protein</topology>
    </subcellularLocation>
</comment>
<comment type="tissue specificity">
    <text evidence="6 8">Predominantly expressed in immune and gastrointestinal tissues (PubMed:16754668). Strongly GPR35 expressed in colonic macrophages (PubMed:32755573).</text>
</comment>
<comment type="induction">
    <text evidence="8">Expression is modulated by the microbiota and induced by inflammation.</text>
</comment>
<comment type="PTM">
    <text evidence="2">Multiply phosphorylated in clusters of serines and threonines in the C-terminal tail. Phosphorylation of Ser-298 and Ser-301 is mediated by GRK5 and/or GRK6.</text>
</comment>
<comment type="disruption phenotype">
    <text evidence="8">GPR35-deficient mice show compromised exercise-induced adipose tissue browning (PubMed:29414686). Conditional deletion in macrophages results in increased susceptibility to DSS-induced colitis, associated with reduced TNF production (PubMed:32755573).</text>
</comment>
<comment type="similarity">
    <text evidence="4">Belongs to the G-protein coupled receptor 1 family.</text>
</comment>
<organism>
    <name type="scientific">Mus musculus</name>
    <name type="common">Mouse</name>
    <dbReference type="NCBI Taxonomy" id="10090"/>
    <lineage>
        <taxon>Eukaryota</taxon>
        <taxon>Metazoa</taxon>
        <taxon>Chordata</taxon>
        <taxon>Craniata</taxon>
        <taxon>Vertebrata</taxon>
        <taxon>Euteleostomi</taxon>
        <taxon>Mammalia</taxon>
        <taxon>Eutheria</taxon>
        <taxon>Euarchontoglires</taxon>
        <taxon>Glires</taxon>
        <taxon>Rodentia</taxon>
        <taxon>Myomorpha</taxon>
        <taxon>Muroidea</taxon>
        <taxon>Muridae</taxon>
        <taxon>Murinae</taxon>
        <taxon>Mus</taxon>
        <taxon>Mus</taxon>
    </lineage>
</organism>
<protein>
    <recommendedName>
        <fullName>G-protein coupled receptor 35</fullName>
    </recommendedName>
    <alternativeName>
        <fullName>Kynurenic acid receptor</fullName>
        <shortName>KYNA receptor</shortName>
    </alternativeName>
</protein>